<evidence type="ECO:0000250" key="1"/>
<evidence type="ECO:0000255" key="2"/>
<evidence type="ECO:0000305" key="3"/>
<organism>
    <name type="scientific">Yersinia pseudotuberculosis serotype O:1b (strain IP 31758)</name>
    <dbReference type="NCBI Taxonomy" id="349747"/>
    <lineage>
        <taxon>Bacteria</taxon>
        <taxon>Pseudomonadati</taxon>
        <taxon>Pseudomonadota</taxon>
        <taxon>Gammaproteobacteria</taxon>
        <taxon>Enterobacterales</taxon>
        <taxon>Yersiniaceae</taxon>
        <taxon>Yersinia</taxon>
    </lineage>
</organism>
<reference key="1">
    <citation type="journal article" date="2007" name="PLoS Genet.">
        <title>The complete genome sequence of Yersinia pseudotuberculosis IP31758, the causative agent of Far East scarlet-like fever.</title>
        <authorList>
            <person name="Eppinger M."/>
            <person name="Rosovitz M.J."/>
            <person name="Fricke W.F."/>
            <person name="Rasko D.A."/>
            <person name="Kokorina G."/>
            <person name="Fayolle C."/>
            <person name="Lindler L.E."/>
            <person name="Carniel E."/>
            <person name="Ravel J."/>
        </authorList>
    </citation>
    <scope>NUCLEOTIDE SEQUENCE [LARGE SCALE GENOMIC DNA]</scope>
    <source>
        <strain>IP 31758</strain>
    </source>
</reference>
<accession>A7FMJ9</accession>
<feature type="chain" id="PRO_0000351387" description="Autoinducer 2 import system permease protein LsrD">
    <location>
        <begin position="1"/>
        <end position="333"/>
    </location>
</feature>
<feature type="transmembrane region" description="Helical" evidence="2">
    <location>
        <begin position="7"/>
        <end position="27"/>
    </location>
</feature>
<feature type="transmembrane region" description="Helical" evidence="2">
    <location>
        <begin position="45"/>
        <end position="65"/>
    </location>
</feature>
<feature type="transmembrane region" description="Helical" evidence="2">
    <location>
        <begin position="67"/>
        <end position="87"/>
    </location>
</feature>
<feature type="transmembrane region" description="Helical" evidence="2">
    <location>
        <begin position="90"/>
        <end position="110"/>
    </location>
</feature>
<feature type="transmembrane region" description="Helical" evidence="2">
    <location>
        <begin position="118"/>
        <end position="138"/>
    </location>
</feature>
<feature type="transmembrane region" description="Helical" evidence="2">
    <location>
        <begin position="162"/>
        <end position="182"/>
    </location>
</feature>
<feature type="transmembrane region" description="Helical" evidence="2">
    <location>
        <begin position="212"/>
        <end position="232"/>
    </location>
</feature>
<feature type="transmembrane region" description="Helical" evidence="2">
    <location>
        <begin position="240"/>
        <end position="260"/>
    </location>
</feature>
<feature type="transmembrane region" description="Helical" evidence="2">
    <location>
        <begin position="261"/>
        <end position="281"/>
    </location>
</feature>
<feature type="transmembrane region" description="Helical" evidence="2">
    <location>
        <begin position="288"/>
        <end position="308"/>
    </location>
</feature>
<protein>
    <recommendedName>
        <fullName>Autoinducer 2 import system permease protein LsrD</fullName>
        <shortName>AI-2 import system permease protein LsrD</shortName>
    </recommendedName>
</protein>
<dbReference type="EMBL" id="CP000720">
    <property type="protein sequence ID" value="ABS49016.1"/>
    <property type="molecule type" value="Genomic_DNA"/>
</dbReference>
<dbReference type="RefSeq" id="WP_012105716.1">
    <property type="nucleotide sequence ID" value="NC_009708.1"/>
</dbReference>
<dbReference type="KEGG" id="ypi:YpsIP31758_3523"/>
<dbReference type="HOGENOM" id="CLU_028880_0_0_6"/>
<dbReference type="Proteomes" id="UP000002412">
    <property type="component" value="Chromosome"/>
</dbReference>
<dbReference type="GO" id="GO:0005886">
    <property type="term" value="C:plasma membrane"/>
    <property type="evidence" value="ECO:0007669"/>
    <property type="project" value="UniProtKB-SubCell"/>
</dbReference>
<dbReference type="GO" id="GO:0022857">
    <property type="term" value="F:transmembrane transporter activity"/>
    <property type="evidence" value="ECO:0007669"/>
    <property type="project" value="InterPro"/>
</dbReference>
<dbReference type="CDD" id="cd06579">
    <property type="entry name" value="TM_PBP1_transp_AraH_like"/>
    <property type="match status" value="1"/>
</dbReference>
<dbReference type="InterPro" id="IPR001851">
    <property type="entry name" value="ABC_transp_permease"/>
</dbReference>
<dbReference type="NCBIfam" id="NF011612">
    <property type="entry name" value="PRK15038.1"/>
    <property type="match status" value="1"/>
</dbReference>
<dbReference type="PANTHER" id="PTHR32196">
    <property type="entry name" value="ABC TRANSPORTER PERMEASE PROTEIN YPHD-RELATED-RELATED"/>
    <property type="match status" value="1"/>
</dbReference>
<dbReference type="PANTHER" id="PTHR32196:SF71">
    <property type="entry name" value="AUTOINDUCER 2 IMPORT SYSTEM PERMEASE PROTEIN LSRD"/>
    <property type="match status" value="1"/>
</dbReference>
<dbReference type="Pfam" id="PF02653">
    <property type="entry name" value="BPD_transp_2"/>
    <property type="match status" value="1"/>
</dbReference>
<sequence>MNLYRRYGWELTLAALLVLEILLFGLSNSRMLDINVLLFSTSDFICIGIVALPLTMVIVSGGIDISFGSTIGLCAIFLGIVFQAGVPMSVAIPLTVLIGALCGLINAGLILYTGVNPLVITLGTLYLFGGSALLLSGLSGATGYEGIGGFPAAFTDFANQTLFGLPIPLVIFMLCVLLFWLLMHRTHSGRHVFLIGQSSRVARYSALPIARTLCMLYAMTGVASAIAAILLVSYFGSARSDLGASFLMPAITAVVLGGANIYGGSGSILGTALAVLLVGYLQQGLQMIGTPNQISSALSGALLILVVVGRSISLHRHLIYEWLQRRRSRKASA</sequence>
<gene>
    <name type="primary">lsrD</name>
    <name type="ordered locus">YpsIP31758_3523</name>
</gene>
<name>LSRD_YERP3</name>
<keyword id="KW-0997">Cell inner membrane</keyword>
<keyword id="KW-1003">Cell membrane</keyword>
<keyword id="KW-0472">Membrane</keyword>
<keyword id="KW-0812">Transmembrane</keyword>
<keyword id="KW-1133">Transmembrane helix</keyword>
<keyword id="KW-0813">Transport</keyword>
<comment type="function">
    <text evidence="1">Part of the ABC transporter complex LsrABCD involved in autoinducer 2 (AI-2) import. Probably responsible for the translocation of the substrate across the membrane (By similarity).</text>
</comment>
<comment type="subunit">
    <text evidence="1">The complex is composed of two ATP-binding proteins (LsrA), two transmembrane proteins (LsrC and LsrD) and a solute-binding protein (LsrB).</text>
</comment>
<comment type="subcellular location">
    <subcellularLocation>
        <location evidence="1">Cell inner membrane</location>
        <topology evidence="1">Multi-pass membrane protein</topology>
    </subcellularLocation>
</comment>
<comment type="similarity">
    <text evidence="3">Belongs to the binding-protein-dependent transport system permease family. AraH/RbsC subfamily.</text>
</comment>
<proteinExistence type="inferred from homology"/>